<reference key="1">
    <citation type="journal article" date="2005" name="Jpn. Agric. Res. Q.">
        <title>Genome sequence of Xanthomonas oryzae pv. oryzae suggests contribution of large numbers of effector genes and insertion sequences to its race diversity.</title>
        <authorList>
            <person name="Ochiai H."/>
            <person name="Inoue Y."/>
            <person name="Takeya M."/>
            <person name="Sasaki A."/>
            <person name="Kaku H."/>
        </authorList>
    </citation>
    <scope>NUCLEOTIDE SEQUENCE [LARGE SCALE GENOMIC DNA]</scope>
    <source>
        <strain>MAFF 311018</strain>
    </source>
</reference>
<evidence type="ECO:0000255" key="1">
    <source>
        <dbReference type="HAMAP-Rule" id="MF_00064"/>
    </source>
</evidence>
<organism>
    <name type="scientific">Xanthomonas oryzae pv. oryzae (strain MAFF 311018)</name>
    <dbReference type="NCBI Taxonomy" id="342109"/>
    <lineage>
        <taxon>Bacteria</taxon>
        <taxon>Pseudomonadati</taxon>
        <taxon>Pseudomonadota</taxon>
        <taxon>Gammaproteobacteria</taxon>
        <taxon>Lysobacterales</taxon>
        <taxon>Lysobacteraceae</taxon>
        <taxon>Xanthomonas</taxon>
    </lineage>
</organism>
<comment type="function">
    <text evidence="1">With CysN forms the ATP sulfurylase (ATPS) that catalyzes the adenylation of sulfate producing adenosine 5'-phosphosulfate (APS) and diphosphate, the first enzymatic step in sulfur assimilation pathway. APS synthesis involves the formation of a high-energy phosphoric-sulfuric acid anhydride bond driven by GTP hydrolysis by CysN coupled to ATP hydrolysis by CysD.</text>
</comment>
<comment type="catalytic activity">
    <reaction evidence="1">
        <text>sulfate + ATP + H(+) = adenosine 5'-phosphosulfate + diphosphate</text>
        <dbReference type="Rhea" id="RHEA:18133"/>
        <dbReference type="ChEBI" id="CHEBI:15378"/>
        <dbReference type="ChEBI" id="CHEBI:16189"/>
        <dbReference type="ChEBI" id="CHEBI:30616"/>
        <dbReference type="ChEBI" id="CHEBI:33019"/>
        <dbReference type="ChEBI" id="CHEBI:58243"/>
        <dbReference type="EC" id="2.7.7.4"/>
    </reaction>
</comment>
<comment type="pathway">
    <text evidence="1">Sulfur metabolism; hydrogen sulfide biosynthesis; sulfite from sulfate: step 1/3.</text>
</comment>
<comment type="subunit">
    <text evidence="1">Heterodimer composed of CysD, the smaller subunit, and CysN.</text>
</comment>
<comment type="similarity">
    <text evidence="1">Belongs to the PAPS reductase family. CysD subfamily.</text>
</comment>
<gene>
    <name evidence="1" type="primary">cysD</name>
    <name type="ordered locus">XOO3198</name>
</gene>
<proteinExistence type="inferred from homology"/>
<accession>Q2P0H4</accession>
<feature type="chain" id="PRO_0000340227" description="Sulfate adenylyltransferase subunit 2">
    <location>
        <begin position="1"/>
        <end position="302"/>
    </location>
</feature>
<name>CYSD_XANOM</name>
<keyword id="KW-0067">ATP-binding</keyword>
<keyword id="KW-0547">Nucleotide-binding</keyword>
<keyword id="KW-0548">Nucleotidyltransferase</keyword>
<keyword id="KW-0808">Transferase</keyword>
<protein>
    <recommendedName>
        <fullName evidence="1">Sulfate adenylyltransferase subunit 2</fullName>
        <ecNumber evidence="1">2.7.7.4</ecNumber>
    </recommendedName>
    <alternativeName>
        <fullName evidence="1">ATP-sulfurylase small subunit</fullName>
    </alternativeName>
    <alternativeName>
        <fullName evidence="1">Sulfate adenylate transferase</fullName>
        <shortName evidence="1">SAT</shortName>
    </alternativeName>
</protein>
<sequence>MTLPPLSHLDRLEAESIHILREVAAEFRAPVMLYSVGKDSSVLLHLLLKAFAPSRPPIPLLHIDTRWKFREMIAFRDRRAAETGVDLRVHINPDGVAQDVSPISHGAAVHTDIMKTQGLKQALEQGGFDAAIGGARRDEEKSRAKERVFSFRNARHRWDPKNQRPELWNLYNARTKPGESVRVFPLSNWTELDVWLYIYREKIPVVPLYFAAPRPVVARDGAWIMVDDARLPLHPGETPQLRSVRFRTLGCYPLTGAIESSADTLEAVIAEMLVSTSSERQGRMIDHAPGASMEQKKVEGYF</sequence>
<dbReference type="EC" id="2.7.7.4" evidence="1"/>
<dbReference type="EMBL" id="AP008229">
    <property type="protein sequence ID" value="BAE69953.1"/>
    <property type="molecule type" value="Genomic_DNA"/>
</dbReference>
<dbReference type="RefSeq" id="WP_011259870.1">
    <property type="nucleotide sequence ID" value="NC_007705.1"/>
</dbReference>
<dbReference type="SMR" id="Q2P0H4"/>
<dbReference type="KEGG" id="xom:XOO3198"/>
<dbReference type="HOGENOM" id="CLU_043026_0_0_6"/>
<dbReference type="UniPathway" id="UPA00140">
    <property type="reaction ID" value="UER00204"/>
</dbReference>
<dbReference type="GO" id="GO:0005524">
    <property type="term" value="F:ATP binding"/>
    <property type="evidence" value="ECO:0007669"/>
    <property type="project" value="UniProtKB-KW"/>
</dbReference>
<dbReference type="GO" id="GO:0004781">
    <property type="term" value="F:sulfate adenylyltransferase (ATP) activity"/>
    <property type="evidence" value="ECO:0007669"/>
    <property type="project" value="UniProtKB-UniRule"/>
</dbReference>
<dbReference type="GO" id="GO:0070814">
    <property type="term" value="P:hydrogen sulfide biosynthetic process"/>
    <property type="evidence" value="ECO:0007669"/>
    <property type="project" value="UniProtKB-UniRule"/>
</dbReference>
<dbReference type="GO" id="GO:0000103">
    <property type="term" value="P:sulfate assimilation"/>
    <property type="evidence" value="ECO:0007669"/>
    <property type="project" value="UniProtKB-UniRule"/>
</dbReference>
<dbReference type="CDD" id="cd23946">
    <property type="entry name" value="Sulfate_adenylyltransferase_2"/>
    <property type="match status" value="1"/>
</dbReference>
<dbReference type="FunFam" id="3.40.50.620:FF:000002">
    <property type="entry name" value="Sulfate adenylyltransferase subunit 2"/>
    <property type="match status" value="1"/>
</dbReference>
<dbReference type="Gene3D" id="3.40.50.620">
    <property type="entry name" value="HUPs"/>
    <property type="match status" value="1"/>
</dbReference>
<dbReference type="HAMAP" id="MF_00064">
    <property type="entry name" value="Sulf_adenylyltr_sub2"/>
    <property type="match status" value="1"/>
</dbReference>
<dbReference type="InterPro" id="IPR002500">
    <property type="entry name" value="PAPS_reduct_dom"/>
</dbReference>
<dbReference type="InterPro" id="IPR014729">
    <property type="entry name" value="Rossmann-like_a/b/a_fold"/>
</dbReference>
<dbReference type="InterPro" id="IPR011784">
    <property type="entry name" value="SO4_adenylTrfase_ssu"/>
</dbReference>
<dbReference type="InterPro" id="IPR050128">
    <property type="entry name" value="Sulfate_adenylyltrnsfr_sub2"/>
</dbReference>
<dbReference type="NCBIfam" id="TIGR02039">
    <property type="entry name" value="CysD"/>
    <property type="match status" value="1"/>
</dbReference>
<dbReference type="NCBIfam" id="NF003587">
    <property type="entry name" value="PRK05253.1"/>
    <property type="match status" value="1"/>
</dbReference>
<dbReference type="NCBIfam" id="NF009214">
    <property type="entry name" value="PRK12563.1"/>
    <property type="match status" value="1"/>
</dbReference>
<dbReference type="PANTHER" id="PTHR43196">
    <property type="entry name" value="SULFATE ADENYLYLTRANSFERASE SUBUNIT 2"/>
    <property type="match status" value="1"/>
</dbReference>
<dbReference type="PANTHER" id="PTHR43196:SF1">
    <property type="entry name" value="SULFATE ADENYLYLTRANSFERASE SUBUNIT 2"/>
    <property type="match status" value="1"/>
</dbReference>
<dbReference type="Pfam" id="PF01507">
    <property type="entry name" value="PAPS_reduct"/>
    <property type="match status" value="1"/>
</dbReference>
<dbReference type="PIRSF" id="PIRSF002936">
    <property type="entry name" value="CysDAde_trans"/>
    <property type="match status" value="1"/>
</dbReference>
<dbReference type="SUPFAM" id="SSF52402">
    <property type="entry name" value="Adenine nucleotide alpha hydrolases-like"/>
    <property type="match status" value="1"/>
</dbReference>